<proteinExistence type="inferred from homology"/>
<accession>Q1IE99</accession>
<name>HIS1_PSEE4</name>
<dbReference type="EC" id="2.4.2.17" evidence="1"/>
<dbReference type="EMBL" id="CT573326">
    <property type="protein sequence ID" value="CAK14006.1"/>
    <property type="molecule type" value="Genomic_DNA"/>
</dbReference>
<dbReference type="RefSeq" id="WP_011532429.1">
    <property type="nucleotide sequence ID" value="NC_008027.1"/>
</dbReference>
<dbReference type="SMR" id="Q1IE99"/>
<dbReference type="STRING" id="384676.PSEEN1106"/>
<dbReference type="GeneID" id="90538475"/>
<dbReference type="KEGG" id="pen:PSEEN1106"/>
<dbReference type="eggNOG" id="COG0040">
    <property type="taxonomic scope" value="Bacteria"/>
</dbReference>
<dbReference type="HOGENOM" id="CLU_038115_2_0_6"/>
<dbReference type="OrthoDB" id="9801867at2"/>
<dbReference type="UniPathway" id="UPA00031">
    <property type="reaction ID" value="UER00006"/>
</dbReference>
<dbReference type="Proteomes" id="UP000000658">
    <property type="component" value="Chromosome"/>
</dbReference>
<dbReference type="GO" id="GO:0005737">
    <property type="term" value="C:cytoplasm"/>
    <property type="evidence" value="ECO:0007669"/>
    <property type="project" value="UniProtKB-SubCell"/>
</dbReference>
<dbReference type="GO" id="GO:0005524">
    <property type="term" value="F:ATP binding"/>
    <property type="evidence" value="ECO:0007669"/>
    <property type="project" value="UniProtKB-KW"/>
</dbReference>
<dbReference type="GO" id="GO:0003879">
    <property type="term" value="F:ATP phosphoribosyltransferase activity"/>
    <property type="evidence" value="ECO:0007669"/>
    <property type="project" value="UniProtKB-UniRule"/>
</dbReference>
<dbReference type="GO" id="GO:0000105">
    <property type="term" value="P:L-histidine biosynthetic process"/>
    <property type="evidence" value="ECO:0007669"/>
    <property type="project" value="UniProtKB-UniRule"/>
</dbReference>
<dbReference type="CDD" id="cd13595">
    <property type="entry name" value="PBP2_HisGs"/>
    <property type="match status" value="1"/>
</dbReference>
<dbReference type="FunFam" id="3.40.190.10:FF:000011">
    <property type="entry name" value="ATP phosphoribosyltransferase"/>
    <property type="match status" value="1"/>
</dbReference>
<dbReference type="Gene3D" id="3.40.190.10">
    <property type="entry name" value="Periplasmic binding protein-like II"/>
    <property type="match status" value="2"/>
</dbReference>
<dbReference type="HAMAP" id="MF_01018">
    <property type="entry name" value="HisG_Short"/>
    <property type="match status" value="1"/>
</dbReference>
<dbReference type="InterPro" id="IPR013820">
    <property type="entry name" value="ATP_PRibTrfase_cat"/>
</dbReference>
<dbReference type="InterPro" id="IPR018198">
    <property type="entry name" value="ATP_PRibTrfase_CS"/>
</dbReference>
<dbReference type="InterPro" id="IPR001348">
    <property type="entry name" value="ATP_PRibTrfase_HisG"/>
</dbReference>
<dbReference type="InterPro" id="IPR024893">
    <property type="entry name" value="ATP_PRibTrfase_HisG_short"/>
</dbReference>
<dbReference type="NCBIfam" id="TIGR00070">
    <property type="entry name" value="hisG"/>
    <property type="match status" value="1"/>
</dbReference>
<dbReference type="PANTHER" id="PTHR21403:SF8">
    <property type="entry name" value="ATP PHOSPHORIBOSYLTRANSFERASE"/>
    <property type="match status" value="1"/>
</dbReference>
<dbReference type="PANTHER" id="PTHR21403">
    <property type="entry name" value="ATP PHOSPHORIBOSYLTRANSFERASE ATP-PRTASE"/>
    <property type="match status" value="1"/>
</dbReference>
<dbReference type="Pfam" id="PF01634">
    <property type="entry name" value="HisG"/>
    <property type="match status" value="1"/>
</dbReference>
<dbReference type="SUPFAM" id="SSF53850">
    <property type="entry name" value="Periplasmic binding protein-like II"/>
    <property type="match status" value="1"/>
</dbReference>
<dbReference type="PROSITE" id="PS01316">
    <property type="entry name" value="ATP_P_PHORIBOSYLTR"/>
    <property type="match status" value="1"/>
</dbReference>
<organism>
    <name type="scientific">Pseudomonas entomophila (strain L48)</name>
    <dbReference type="NCBI Taxonomy" id="384676"/>
    <lineage>
        <taxon>Bacteria</taxon>
        <taxon>Pseudomonadati</taxon>
        <taxon>Pseudomonadota</taxon>
        <taxon>Gammaproteobacteria</taxon>
        <taxon>Pseudomonadales</taxon>
        <taxon>Pseudomonadaceae</taxon>
        <taxon>Pseudomonas</taxon>
    </lineage>
</organism>
<sequence>MLTIALSKGRILDDTLPLLAEAGIVPTENPDKSRKLIIPTTQDDVRLLIVRATDVPTYVEHGAADLGVAGKDVLMEYGGQGLYEPLDLQIAQCKLMTAGVTGAPEPKGRLRVATKFVNVAKRYYAEQGRQVDIIKLYGSMELAPLINLADKIIDVVDTGNTLRANGLEPQELIATISSRLVVNKASMKMQHARIQSLIDTLRNAVESRHRG</sequence>
<keyword id="KW-0028">Amino-acid biosynthesis</keyword>
<keyword id="KW-0067">ATP-binding</keyword>
<keyword id="KW-0963">Cytoplasm</keyword>
<keyword id="KW-0328">Glycosyltransferase</keyword>
<keyword id="KW-0368">Histidine biosynthesis</keyword>
<keyword id="KW-0547">Nucleotide-binding</keyword>
<keyword id="KW-0808">Transferase</keyword>
<protein>
    <recommendedName>
        <fullName evidence="1">ATP phosphoribosyltransferase</fullName>
        <shortName evidence="1">ATP-PRT</shortName>
        <shortName evidence="1">ATP-PRTase</shortName>
        <ecNumber evidence="1">2.4.2.17</ecNumber>
    </recommendedName>
</protein>
<evidence type="ECO:0000255" key="1">
    <source>
        <dbReference type="HAMAP-Rule" id="MF_01018"/>
    </source>
</evidence>
<feature type="chain" id="PRO_1000063299" description="ATP phosphoribosyltransferase">
    <location>
        <begin position="1"/>
        <end position="211"/>
    </location>
</feature>
<gene>
    <name evidence="1" type="primary">hisG</name>
    <name type="ordered locus">PSEEN1106</name>
</gene>
<comment type="function">
    <text evidence="1">Catalyzes the condensation of ATP and 5-phosphoribose 1-diphosphate to form N'-(5'-phosphoribosyl)-ATP (PR-ATP). Has a crucial role in the pathway because the rate of histidine biosynthesis seems to be controlled primarily by regulation of HisG enzymatic activity.</text>
</comment>
<comment type="catalytic activity">
    <reaction evidence="1">
        <text>1-(5-phospho-beta-D-ribosyl)-ATP + diphosphate = 5-phospho-alpha-D-ribose 1-diphosphate + ATP</text>
        <dbReference type="Rhea" id="RHEA:18473"/>
        <dbReference type="ChEBI" id="CHEBI:30616"/>
        <dbReference type="ChEBI" id="CHEBI:33019"/>
        <dbReference type="ChEBI" id="CHEBI:58017"/>
        <dbReference type="ChEBI" id="CHEBI:73183"/>
        <dbReference type="EC" id="2.4.2.17"/>
    </reaction>
</comment>
<comment type="pathway">
    <text evidence="1">Amino-acid biosynthesis; L-histidine biosynthesis; L-histidine from 5-phospho-alpha-D-ribose 1-diphosphate: step 1/9.</text>
</comment>
<comment type="subunit">
    <text evidence="1">Heteromultimer composed of HisG and HisZ subunits.</text>
</comment>
<comment type="subcellular location">
    <subcellularLocation>
        <location evidence="1">Cytoplasm</location>
    </subcellularLocation>
</comment>
<comment type="domain">
    <text>Lacks the C-terminal regulatory region which is replaced by HisZ.</text>
</comment>
<comment type="similarity">
    <text evidence="1">Belongs to the ATP phosphoribosyltransferase family. Short subfamily.</text>
</comment>
<reference key="1">
    <citation type="journal article" date="2006" name="Nat. Biotechnol.">
        <title>Complete genome sequence of the entomopathogenic and metabolically versatile soil bacterium Pseudomonas entomophila.</title>
        <authorList>
            <person name="Vodovar N."/>
            <person name="Vallenet D."/>
            <person name="Cruveiller S."/>
            <person name="Rouy Z."/>
            <person name="Barbe V."/>
            <person name="Acosta C."/>
            <person name="Cattolico L."/>
            <person name="Jubin C."/>
            <person name="Lajus A."/>
            <person name="Segurens B."/>
            <person name="Vacherie B."/>
            <person name="Wincker P."/>
            <person name="Weissenbach J."/>
            <person name="Lemaitre B."/>
            <person name="Medigue C."/>
            <person name="Boccard F."/>
        </authorList>
    </citation>
    <scope>NUCLEOTIDE SEQUENCE [LARGE SCALE GENOMIC DNA]</scope>
    <source>
        <strain>L48</strain>
    </source>
</reference>